<dbReference type="EC" id="2.4.1.142" evidence="1"/>
<dbReference type="EMBL" id="AE016817">
    <property type="protein sequence ID" value="AAS51581.2"/>
    <property type="molecule type" value="Genomic_DNA"/>
</dbReference>
<dbReference type="RefSeq" id="NP_983757.2">
    <property type="nucleotide sequence ID" value="NM_209110.2"/>
</dbReference>
<dbReference type="SMR" id="Q75BA5"/>
<dbReference type="FunCoup" id="Q75BA5">
    <property type="interactions" value="934"/>
</dbReference>
<dbReference type="STRING" id="284811.Q75BA5"/>
<dbReference type="CAZy" id="GT33">
    <property type="family name" value="Glycosyltransferase Family 33"/>
</dbReference>
<dbReference type="GlyCosmos" id="Q75BA5">
    <property type="glycosylation" value="1 site, No reported glycans"/>
</dbReference>
<dbReference type="EnsemblFungi" id="AAS51581">
    <property type="protein sequence ID" value="AAS51581"/>
    <property type="gene ID" value="AGOS_ADL338C"/>
</dbReference>
<dbReference type="GeneID" id="4619892"/>
<dbReference type="KEGG" id="ago:AGOS_ADL338C"/>
<dbReference type="eggNOG" id="KOG2941">
    <property type="taxonomic scope" value="Eukaryota"/>
</dbReference>
<dbReference type="HOGENOM" id="CLU_012079_0_0_1"/>
<dbReference type="InParanoid" id="Q75BA5"/>
<dbReference type="OMA" id="CKLIIDW"/>
<dbReference type="OrthoDB" id="614844at2759"/>
<dbReference type="UniPathway" id="UPA00378"/>
<dbReference type="Proteomes" id="UP000000591">
    <property type="component" value="Chromosome IV"/>
</dbReference>
<dbReference type="GO" id="GO:0098554">
    <property type="term" value="C:cytoplasmic side of endoplasmic reticulum membrane"/>
    <property type="evidence" value="ECO:0000250"/>
    <property type="project" value="UniProtKB"/>
</dbReference>
<dbReference type="GO" id="GO:0005783">
    <property type="term" value="C:endoplasmic reticulum"/>
    <property type="evidence" value="ECO:0000318"/>
    <property type="project" value="GO_Central"/>
</dbReference>
<dbReference type="GO" id="GO:0004578">
    <property type="term" value="F:chitobiosyldiphosphodolichol beta-mannosyltransferase activity"/>
    <property type="evidence" value="ECO:0000250"/>
    <property type="project" value="UniProtKB"/>
</dbReference>
<dbReference type="GO" id="GO:0000030">
    <property type="term" value="F:mannosyltransferase activity"/>
    <property type="evidence" value="ECO:0000318"/>
    <property type="project" value="GO_Central"/>
</dbReference>
<dbReference type="GO" id="GO:0006488">
    <property type="term" value="P:dolichol-linked oligosaccharide biosynthetic process"/>
    <property type="evidence" value="ECO:0000250"/>
    <property type="project" value="UniProtKB"/>
</dbReference>
<dbReference type="GO" id="GO:0006486">
    <property type="term" value="P:protein glycosylation"/>
    <property type="evidence" value="ECO:0000318"/>
    <property type="project" value="GO_Central"/>
</dbReference>
<dbReference type="CDD" id="cd03816">
    <property type="entry name" value="GT33_ALG1-like"/>
    <property type="match status" value="1"/>
</dbReference>
<dbReference type="FunFam" id="3.40.50.2000:FF:000216">
    <property type="entry name" value="Chitobiosyldiphosphodolichol beta-mannosyltransferase"/>
    <property type="match status" value="1"/>
</dbReference>
<dbReference type="Gene3D" id="3.40.50.2000">
    <property type="entry name" value="Glycogen Phosphorylase B"/>
    <property type="match status" value="1"/>
</dbReference>
<dbReference type="InterPro" id="IPR026051">
    <property type="entry name" value="ALG1-like"/>
</dbReference>
<dbReference type="InterPro" id="IPR001296">
    <property type="entry name" value="Glyco_trans_1"/>
</dbReference>
<dbReference type="InterPro" id="IPR028098">
    <property type="entry name" value="Glyco_trans_4-like_N"/>
</dbReference>
<dbReference type="PANTHER" id="PTHR13036">
    <property type="entry name" value="BETA1,4 MANNOSYLTRANSFERASE"/>
    <property type="match status" value="1"/>
</dbReference>
<dbReference type="PANTHER" id="PTHR13036:SF0">
    <property type="entry name" value="CHITOBIOSYLDIPHOSPHODOLICHOL BETA-MANNOSYLTRANSFERASE"/>
    <property type="match status" value="1"/>
</dbReference>
<dbReference type="Pfam" id="PF13579">
    <property type="entry name" value="Glyco_trans_4_4"/>
    <property type="match status" value="1"/>
</dbReference>
<dbReference type="Pfam" id="PF00534">
    <property type="entry name" value="Glycos_transf_1"/>
    <property type="match status" value="1"/>
</dbReference>
<dbReference type="SUPFAM" id="SSF53756">
    <property type="entry name" value="UDP-Glycosyltransferase/glycogen phosphorylase"/>
    <property type="match status" value="1"/>
</dbReference>
<reference key="1">
    <citation type="journal article" date="2004" name="Science">
        <title>The Ashbya gossypii genome as a tool for mapping the ancient Saccharomyces cerevisiae genome.</title>
        <authorList>
            <person name="Dietrich F.S."/>
            <person name="Voegeli S."/>
            <person name="Brachat S."/>
            <person name="Lerch A."/>
            <person name="Gates K."/>
            <person name="Steiner S."/>
            <person name="Mohr C."/>
            <person name="Poehlmann R."/>
            <person name="Luedi P."/>
            <person name="Choi S."/>
            <person name="Wing R.A."/>
            <person name="Flavier A."/>
            <person name="Gaffney T.D."/>
            <person name="Philippsen P."/>
        </authorList>
    </citation>
    <scope>NUCLEOTIDE SEQUENCE [LARGE SCALE GENOMIC DNA]</scope>
    <source>
        <strain>ATCC 10895 / CBS 109.51 / FGSC 9923 / NRRL Y-1056</strain>
    </source>
</reference>
<reference key="2">
    <citation type="journal article" date="2013" name="G3 (Bethesda)">
        <title>Genomes of Ashbya fungi isolated from insects reveal four mating-type loci, numerous translocations, lack of transposons, and distinct gene duplications.</title>
        <authorList>
            <person name="Dietrich F.S."/>
            <person name="Voegeli S."/>
            <person name="Kuo S."/>
            <person name="Philippsen P."/>
        </authorList>
    </citation>
    <scope>GENOME REANNOTATION</scope>
    <scope>SEQUENCE REVISION TO 457</scope>
    <source>
        <strain>ATCC 10895 / CBS 109.51 / FGSC 9923 / NRRL Y-1056</strain>
    </source>
</reference>
<protein>
    <recommendedName>
        <fullName evidence="1">Chitobiosyldiphosphodolichol beta-mannosyltransferase</fullName>
        <ecNumber evidence="1">2.4.1.142</ecNumber>
    </recommendedName>
    <alternativeName>
        <fullName>Asparagine-linked glycosylation protein 1</fullName>
    </alternativeName>
    <alternativeName>
        <fullName>Beta-1,4-mannosyltransferase</fullName>
    </alternativeName>
    <alternativeName>
        <fullName>GDP-Man:GlcNAc2-PP-dolichol mannosyltransferase</fullName>
    </alternativeName>
    <alternativeName>
        <fullName>GDP-mannose-dolichol diphosphochitobiose mannosyltransferase</fullName>
    </alternativeName>
</protein>
<evidence type="ECO:0000250" key="1">
    <source>
        <dbReference type="UniProtKB" id="P16661"/>
    </source>
</evidence>
<evidence type="ECO:0000255" key="2"/>
<evidence type="ECO:0000305" key="3"/>
<feature type="chain" id="PRO_0000080252" description="Chitobiosyldiphosphodolichol beta-mannosyltransferase">
    <location>
        <begin position="1"/>
        <end position="471"/>
    </location>
</feature>
<feature type="topological domain" description="Lumenal" evidence="1">
    <location>
        <begin position="1"/>
        <end position="31"/>
    </location>
</feature>
<feature type="transmembrane region" description="Helical" evidence="2">
    <location>
        <begin position="32"/>
        <end position="52"/>
    </location>
</feature>
<feature type="topological domain" description="Cytoplasmic" evidence="1">
    <location>
        <begin position="53"/>
        <end position="126"/>
    </location>
</feature>
<feature type="intramembrane region" description="Helical" evidence="2">
    <location>
        <begin position="127"/>
        <end position="147"/>
    </location>
</feature>
<feature type="topological domain" description="Cytoplasmic" evidence="1">
    <location>
        <begin position="148"/>
        <end position="471"/>
    </location>
</feature>
<sequence length="471" mass="53594">MDTSSVTMHTERACCHQAQRAVAAMLDKAPSWLIWTAVLYVGLPFMLYWAVPYLFYHNKTKSRRIAIYVLGDLGHSPRICYHARSFSAAGWEVELCGYLEEQPPKDLLDDPRVTIRALPGASNAGKSLGQTARKVVLQTCHIVRQLWELRGCDYILIQNPPSIPLLPIVAIFKVLTRTRLILDWHNFAYTVLQLRVGRFLHPLVLVSYAVEFLFSRMADYHITVTAAMKDYLVQSFLLPARRIAVMYDRPGEQFRPLPAGERGAALAEPFIRGYIPAGFDVQRGDTILVTSTSFTLDEDINVLFGALKIYESAAAKFDTTLPRILLFVTGKGPLKGKYMEEVRNYKWERCTIHFLWLSAEDYPRLLQLCDFGVSLHTSTSGLDLPMKVLDMFGSGLPAFVMDYPAIGELVQDRVNGLRFTTRRELEQCLIFAIKDEHTRKVLKENALLESKNRWHQSWASAMSELQVVRQS</sequence>
<accession>Q75BA5</accession>
<proteinExistence type="inferred from homology"/>
<keyword id="KW-0256">Endoplasmic reticulum</keyword>
<keyword id="KW-0328">Glycosyltransferase</keyword>
<keyword id="KW-0472">Membrane</keyword>
<keyword id="KW-1185">Reference proteome</keyword>
<keyword id="KW-0735">Signal-anchor</keyword>
<keyword id="KW-0808">Transferase</keyword>
<keyword id="KW-0812">Transmembrane</keyword>
<keyword id="KW-1133">Transmembrane helix</keyword>
<gene>
    <name type="primary">ALG1</name>
    <name type="ordered locus">ADL338C</name>
</gene>
<organism>
    <name type="scientific">Eremothecium gossypii (strain ATCC 10895 / CBS 109.51 / FGSC 9923 / NRRL Y-1056)</name>
    <name type="common">Yeast</name>
    <name type="synonym">Ashbya gossypii</name>
    <dbReference type="NCBI Taxonomy" id="284811"/>
    <lineage>
        <taxon>Eukaryota</taxon>
        <taxon>Fungi</taxon>
        <taxon>Dikarya</taxon>
        <taxon>Ascomycota</taxon>
        <taxon>Saccharomycotina</taxon>
        <taxon>Saccharomycetes</taxon>
        <taxon>Saccharomycetales</taxon>
        <taxon>Saccharomycetaceae</taxon>
        <taxon>Eremothecium</taxon>
    </lineage>
</organism>
<comment type="function">
    <text evidence="1">Participates in the formation of the lipid-linked precursor oligosaccharide for N-glycosylation. Involved in assembling the dolichol-pyrophosphate-GlcNAc(2)-Man(5) intermediate on the cytoplasmic surface of the ER.</text>
</comment>
<comment type="catalytic activity">
    <reaction evidence="1">
        <text>an N,N'-diacetylchitobiosyl-diphospho-di-trans,poly-cis-dolichol + GDP-alpha-D-mannose = a beta-D-Man-(1-&gt;4)-beta-D-GlcNAc-(1-&gt;4)-alpha-D-GlcNAc-diphospho-di-trans,poly-cis-dolichol + GDP + H(+)</text>
        <dbReference type="Rhea" id="RHEA:13865"/>
        <dbReference type="Rhea" id="RHEA-COMP:19510"/>
        <dbReference type="Rhea" id="RHEA-COMP:19511"/>
        <dbReference type="ChEBI" id="CHEBI:15378"/>
        <dbReference type="ChEBI" id="CHEBI:57269"/>
        <dbReference type="ChEBI" id="CHEBI:57527"/>
        <dbReference type="ChEBI" id="CHEBI:58189"/>
        <dbReference type="ChEBI" id="CHEBI:58472"/>
        <dbReference type="EC" id="2.4.1.142"/>
    </reaction>
    <physiologicalReaction direction="left-to-right" evidence="1">
        <dbReference type="Rhea" id="RHEA:13866"/>
    </physiologicalReaction>
</comment>
<comment type="pathway">
    <text evidence="1">Protein modification; protein glycosylation.</text>
</comment>
<comment type="subcellular location">
    <subcellularLocation>
        <location evidence="1">Endoplasmic reticulum membrane</location>
        <topology evidence="1">Single-pass membrane protein</topology>
    </subcellularLocation>
</comment>
<comment type="similarity">
    <text evidence="3">Belongs to the glycosyltransferase group 1 family.</text>
</comment>
<name>ALG1_EREGS</name>